<organism>
    <name type="scientific">Escherichia coli</name>
    <dbReference type="NCBI Taxonomy" id="562"/>
    <lineage>
        <taxon>Bacteria</taxon>
        <taxon>Pseudomonadati</taxon>
        <taxon>Pseudomonadota</taxon>
        <taxon>Gammaproteobacteria</taxon>
        <taxon>Enterobacterales</taxon>
        <taxon>Enterobacteriaceae</taxon>
        <taxon>Escherichia</taxon>
    </lineage>
</organism>
<evidence type="ECO:0000269" key="1">
    <source>
    </source>
</evidence>
<evidence type="ECO:0000305" key="2"/>
<protein>
    <recommendedName>
        <fullName>dTDP-4-amino-4,6-dideoxy-D-glucose acyltransferase</fullName>
        <ecNumber>2.3.1.209</ecNumber>
    </recommendedName>
</protein>
<dbReference type="EC" id="2.3.1.209"/>
<dbReference type="EMBL" id="AF125322">
    <property type="protein sequence ID" value="AAD44155.1"/>
    <property type="molecule type" value="Genomic_DNA"/>
</dbReference>
<dbReference type="SMR" id="Q9XCW3"/>
<dbReference type="KEGG" id="ag:AAD44155"/>
<dbReference type="BioCyc" id="MetaCyc:MONOMER-18137"/>
<dbReference type="BRENDA" id="2.3.1.209">
    <property type="organism ID" value="2026"/>
</dbReference>
<dbReference type="SABIO-RK" id="Q9XCW3"/>
<dbReference type="UniPathway" id="UPA00030"/>
<dbReference type="GO" id="GO:0016746">
    <property type="term" value="F:acyltransferase activity"/>
    <property type="evidence" value="ECO:0007669"/>
    <property type="project" value="UniProtKB-KW"/>
</dbReference>
<dbReference type="GO" id="GO:0009103">
    <property type="term" value="P:lipopolysaccharide biosynthetic process"/>
    <property type="evidence" value="ECO:0007669"/>
    <property type="project" value="UniProtKB-UniPathway"/>
</dbReference>
<dbReference type="CDD" id="cd04647">
    <property type="entry name" value="LbH_MAT_like"/>
    <property type="match status" value="1"/>
</dbReference>
<dbReference type="Gene3D" id="2.160.10.10">
    <property type="entry name" value="Hexapeptide repeat proteins"/>
    <property type="match status" value="1"/>
</dbReference>
<dbReference type="InterPro" id="IPR050179">
    <property type="entry name" value="Trans_hexapeptide_repeat"/>
</dbReference>
<dbReference type="InterPro" id="IPR011004">
    <property type="entry name" value="Trimer_LpxA-like_sf"/>
</dbReference>
<dbReference type="PANTHER" id="PTHR43300">
    <property type="entry name" value="ACETYLTRANSFERASE"/>
    <property type="match status" value="1"/>
</dbReference>
<dbReference type="PANTHER" id="PTHR43300:SF12">
    <property type="entry name" value="CHLORAMPHENICOL ACETYLTRANSFERASE"/>
    <property type="match status" value="1"/>
</dbReference>
<dbReference type="SUPFAM" id="SSF51161">
    <property type="entry name" value="Trimeric LpxA-like enzymes"/>
    <property type="match status" value="1"/>
</dbReference>
<proteinExistence type="evidence at protein level"/>
<gene>
    <name type="primary">vioB</name>
</gene>
<name>VIOB_ECOLX</name>
<reference key="1">
    <citation type="journal article" date="1999" name="Microbiology">
        <title>Genetic organization of the O7-specific lipopolysaccharide biosynthesis cluster of Escherichia coli VW187 (O7:K1).</title>
        <authorList>
            <person name="Marolda C.L."/>
            <person name="Feldman M.F."/>
            <person name="Valvano M.A."/>
        </authorList>
    </citation>
    <scope>NUCLEOTIDE SEQUENCE [GENOMIC DNA]</scope>
    <scope>GENE NAME</scope>
    <source>
        <strain>O7:K1 / VW187</strain>
    </source>
</reference>
<reference key="2">
    <citation type="journal article" date="2007" name="J. Bacteriol.">
        <title>Biochemical characterization of dTDP-D-Qui4N and dTDP-D-Qui4NAc biosynthetic pathways in Shigella dysenteriae type 7 and Escherichia coli O7.</title>
        <authorList>
            <person name="Wang Y."/>
            <person name="Xu Y."/>
            <person name="Perepelov A.V."/>
            <person name="Qi Y."/>
            <person name="Knirel Y.A."/>
            <person name="Wang L."/>
            <person name="Feng L."/>
        </authorList>
    </citation>
    <scope>FUNCTION</scope>
    <scope>CATALYTIC ACTIVITY</scope>
    <scope>BIOPHYSICOCHEMICAL PROPERTIES</scope>
    <scope>PATHWAY</scope>
    <source>
        <strain>O7 / G1112</strain>
    </source>
</reference>
<feature type="chain" id="PRO_0000424156" description="dTDP-4-amino-4,6-dideoxy-D-glucose acyltransferase">
    <location>
        <begin position="1"/>
        <end position="192"/>
    </location>
</feature>
<accession>Q9XCW3</accession>
<comment type="function">
    <text evidence="1">Catalyzes the conversion of dTDP-4-amino-4,6-dideoxy-D-glucose (dTDP-D-Qui4N) to dTDP-4-acetamido-4,6-dideoxy-D-glucose (dTDP-D-Qui4NAc).</text>
</comment>
<comment type="catalytic activity">
    <reaction evidence="1">
        <text>dTDP-4-amino-4,6-dideoxy-alpha-D-glucose + acetyl-CoA = dTDP-4-acetamido-4,6-dideoxy-alpha-D-glucose + CoA + H(+)</text>
        <dbReference type="Rhea" id="RHEA:34531"/>
        <dbReference type="ChEBI" id="CHEBI:15378"/>
        <dbReference type="ChEBI" id="CHEBI:57287"/>
        <dbReference type="ChEBI" id="CHEBI:57288"/>
        <dbReference type="ChEBI" id="CHEBI:68501"/>
        <dbReference type="ChEBI" id="CHEBI:68675"/>
        <dbReference type="EC" id="2.3.1.209"/>
    </reaction>
</comment>
<comment type="biophysicochemical properties">
    <kinetics>
        <KM evidence="1">142 uM for dTDP-D-Qui4N</KM>
        <KM evidence="1">554 uM for acetyl-CoA</KM>
    </kinetics>
</comment>
<comment type="pathway">
    <text evidence="1">Bacterial outer membrane biogenesis; lipopolysaccharide biosynthesis.</text>
</comment>
<comment type="similarity">
    <text evidence="2">Belongs to the transferase hexapeptide repeat family.</text>
</comment>
<keyword id="KW-0012">Acyltransferase</keyword>
<keyword id="KW-0448">Lipopolysaccharide biosynthesis</keyword>
<keyword id="KW-0808">Transferase</keyword>
<sequence length="192" mass="20695">MAYLDEIQLKEMGFKSVGENVKISDKASFYGCDNISIGNNVRIDDFCVFSAGEGGIDIHDYIHIAVYSSIIGKGKVTISDYANISSRVSIYSSNEYYSGNYMSNPVVPSEYTNIHSGTVFIGKHVIIGCGSIVLPDVILHEGAAIGALSVVKEDCEAFTVNVGIPAKPISERSKKLLELESVFKPSAIGDNL</sequence>